<keyword id="KW-0066">ATP synthesis</keyword>
<keyword id="KW-0138">CF(0)</keyword>
<keyword id="KW-0375">Hydrogen ion transport</keyword>
<keyword id="KW-0406">Ion transport</keyword>
<keyword id="KW-0472">Membrane</keyword>
<keyword id="KW-0994">Organellar chromatophore</keyword>
<keyword id="KW-0934">Plastid</keyword>
<keyword id="KW-0793">Thylakoid</keyword>
<keyword id="KW-0812">Transmembrane</keyword>
<keyword id="KW-1133">Transmembrane helix</keyword>
<keyword id="KW-0813">Transport</keyword>
<dbReference type="EMBL" id="CP000815">
    <property type="protein sequence ID" value="ACB42650.1"/>
    <property type="molecule type" value="Genomic_DNA"/>
</dbReference>
<dbReference type="RefSeq" id="YP_002048860.1">
    <property type="nucleotide sequence ID" value="NC_011087.1"/>
</dbReference>
<dbReference type="SMR" id="B1X3Y1"/>
<dbReference type="GeneID" id="6481240"/>
<dbReference type="GO" id="GO:0070118">
    <property type="term" value="C:organellar chromatophore thylakoid membrane"/>
    <property type="evidence" value="ECO:0007669"/>
    <property type="project" value="UniProtKB-SubCell"/>
</dbReference>
<dbReference type="GO" id="GO:0009536">
    <property type="term" value="C:plastid"/>
    <property type="evidence" value="ECO:0007669"/>
    <property type="project" value="UniProtKB-KW"/>
</dbReference>
<dbReference type="GO" id="GO:0045259">
    <property type="term" value="C:proton-transporting ATP synthase complex"/>
    <property type="evidence" value="ECO:0007669"/>
    <property type="project" value="UniProtKB-KW"/>
</dbReference>
<dbReference type="GO" id="GO:0015078">
    <property type="term" value="F:proton transmembrane transporter activity"/>
    <property type="evidence" value="ECO:0007669"/>
    <property type="project" value="InterPro"/>
</dbReference>
<dbReference type="GO" id="GO:0015986">
    <property type="term" value="P:proton motive force-driven ATP synthesis"/>
    <property type="evidence" value="ECO:0007669"/>
    <property type="project" value="InterPro"/>
</dbReference>
<dbReference type="CDD" id="cd00310">
    <property type="entry name" value="ATP-synt_Fo_a_6"/>
    <property type="match status" value="1"/>
</dbReference>
<dbReference type="FunFam" id="1.20.120.220:FF:000001">
    <property type="entry name" value="ATP synthase subunit a, chloroplastic"/>
    <property type="match status" value="1"/>
</dbReference>
<dbReference type="Gene3D" id="1.20.120.220">
    <property type="entry name" value="ATP synthase, F0 complex, subunit A"/>
    <property type="match status" value="1"/>
</dbReference>
<dbReference type="HAMAP" id="MF_01393">
    <property type="entry name" value="ATP_synth_a_bact"/>
    <property type="match status" value="1"/>
</dbReference>
<dbReference type="InterPro" id="IPR045082">
    <property type="entry name" value="ATP_syn_F0_a_bact/chloroplast"/>
</dbReference>
<dbReference type="InterPro" id="IPR000568">
    <property type="entry name" value="ATP_synth_F0_asu"/>
</dbReference>
<dbReference type="InterPro" id="IPR023011">
    <property type="entry name" value="ATP_synth_F0_asu_AS"/>
</dbReference>
<dbReference type="InterPro" id="IPR035908">
    <property type="entry name" value="F0_ATP_A_sf"/>
</dbReference>
<dbReference type="NCBIfam" id="TIGR01131">
    <property type="entry name" value="ATP_synt_6_or_A"/>
    <property type="match status" value="1"/>
</dbReference>
<dbReference type="PANTHER" id="PTHR42823">
    <property type="entry name" value="ATP SYNTHASE SUBUNIT A, CHLOROPLASTIC"/>
    <property type="match status" value="1"/>
</dbReference>
<dbReference type="PANTHER" id="PTHR42823:SF3">
    <property type="entry name" value="ATP SYNTHASE SUBUNIT A, CHLOROPLASTIC"/>
    <property type="match status" value="1"/>
</dbReference>
<dbReference type="Pfam" id="PF00119">
    <property type="entry name" value="ATP-synt_A"/>
    <property type="match status" value="1"/>
</dbReference>
<dbReference type="PRINTS" id="PR00123">
    <property type="entry name" value="ATPASEA"/>
</dbReference>
<dbReference type="SUPFAM" id="SSF81336">
    <property type="entry name" value="F1F0 ATP synthase subunit A"/>
    <property type="match status" value="1"/>
</dbReference>
<dbReference type="PROSITE" id="PS00449">
    <property type="entry name" value="ATPASE_A"/>
    <property type="match status" value="1"/>
</dbReference>
<accession>B1X3Y1</accession>
<reference key="1">
    <citation type="journal article" date="2008" name="Curr. Biol.">
        <title>Chromatophore genome sequence of Paulinella sheds light on acquisition of photosynthesis by eukaryotes.</title>
        <authorList>
            <person name="Nowack E.C.M."/>
            <person name="Melkonian M."/>
            <person name="Gloeckner G."/>
        </authorList>
    </citation>
    <scope>NUCLEOTIDE SEQUENCE [LARGE SCALE GENOMIC DNA]</scope>
</reference>
<comment type="function">
    <text evidence="2">Key component of the proton channel; it plays a direct role in the translocation of protons across the membrane.</text>
</comment>
<comment type="subunit">
    <text evidence="2">F-type ATPases have 2 components, CF(1) - the catalytic core - and CF(0) - the membrane proton channel. CF(1) has five subunits: alpha(3), beta(3), gamma(1), delta(1), epsilon(1). CF(0) has four main subunits: a, b, b' and c.</text>
</comment>
<comment type="subcellular location">
    <subcellularLocation>
        <location evidence="1">Plastid</location>
        <location evidence="1">Organellar chromatophore thylakoid membrane</location>
        <topology evidence="2">Multi-pass membrane protein</topology>
    </subcellularLocation>
</comment>
<comment type="similarity">
    <text evidence="2">Belongs to the ATPase A chain family.</text>
</comment>
<name>ATPI_PAUCH</name>
<protein>
    <recommendedName>
        <fullName evidence="2">ATP synthase subunit a, organellar chromatophore</fullName>
    </recommendedName>
    <alternativeName>
        <fullName evidence="2">ATP synthase F0 sector subunit a</fullName>
    </alternativeName>
    <alternativeName>
        <fullName evidence="2">F-ATPase subunit IV</fullName>
    </alternativeName>
</protein>
<proteinExistence type="inferred from homology"/>
<sequence length="242" mass="27245">MVPLSFPFHVAELEVGQHLYWQIGNLNLHGQVFISSWVVISALLVLVITGTRKMERDPQGVQNLLEFLWDYLRDLAREQIGEKAYRDWLPFIGTLFLFIFGCNWGGALVPWKLIELPNGELGAPTADINTTVAMALLVSLSYFYAGLSRKGLRYFEYYVEPTPIMLPFKIIEDFTKPLSLSFRLFGNILADELVVGVLAFLVPILVPLPAMFLGLFTSAIQALIFATLAANYIGEAVHEEHH</sequence>
<feature type="chain" id="PRO_0000362606" description="ATP synthase subunit a, organellar chromatophore">
    <location>
        <begin position="1"/>
        <end position="242"/>
    </location>
</feature>
<feature type="transmembrane region" description="Helical" evidence="2">
    <location>
        <begin position="28"/>
        <end position="48"/>
    </location>
</feature>
<feature type="transmembrane region" description="Helical" evidence="2">
    <location>
        <begin position="89"/>
        <end position="109"/>
    </location>
</feature>
<feature type="transmembrane region" description="Helical" evidence="2">
    <location>
        <begin position="128"/>
        <end position="148"/>
    </location>
</feature>
<feature type="transmembrane region" description="Helical" evidence="2">
    <location>
        <begin position="193"/>
        <end position="213"/>
    </location>
</feature>
<feature type="transmembrane region" description="Helical" evidence="2">
    <location>
        <begin position="214"/>
        <end position="234"/>
    </location>
</feature>
<gene>
    <name evidence="2" type="primary">atpI</name>
    <name type="ordered locus">PCC_0200</name>
</gene>
<geneLocation type="organellar chromatophore"/>
<organism>
    <name type="scientific">Paulinella chromatophora</name>
    <dbReference type="NCBI Taxonomy" id="39717"/>
    <lineage>
        <taxon>Eukaryota</taxon>
        <taxon>Sar</taxon>
        <taxon>Rhizaria</taxon>
        <taxon>Cercozoa</taxon>
        <taxon>Imbricatea</taxon>
        <taxon>Silicofilosea</taxon>
        <taxon>Euglyphida</taxon>
        <taxon>Paulinellidae</taxon>
        <taxon>Paulinella</taxon>
    </lineage>
</organism>
<evidence type="ECO:0000250" key="1"/>
<evidence type="ECO:0000255" key="2">
    <source>
        <dbReference type="HAMAP-Rule" id="MF_01393"/>
    </source>
</evidence>